<name>PYRB_PSEPG</name>
<proteinExistence type="inferred from homology"/>
<comment type="function">
    <text evidence="1">Catalyzes the condensation of carbamoyl phosphate and aspartate to form carbamoyl aspartate and inorganic phosphate, the committed step in the de novo pyrimidine nucleotide biosynthesis pathway.</text>
</comment>
<comment type="catalytic activity">
    <reaction evidence="1">
        <text>carbamoyl phosphate + L-aspartate = N-carbamoyl-L-aspartate + phosphate + H(+)</text>
        <dbReference type="Rhea" id="RHEA:20013"/>
        <dbReference type="ChEBI" id="CHEBI:15378"/>
        <dbReference type="ChEBI" id="CHEBI:29991"/>
        <dbReference type="ChEBI" id="CHEBI:32814"/>
        <dbReference type="ChEBI" id="CHEBI:43474"/>
        <dbReference type="ChEBI" id="CHEBI:58228"/>
        <dbReference type="EC" id="2.1.3.2"/>
    </reaction>
</comment>
<comment type="pathway">
    <text evidence="1">Pyrimidine metabolism; UMP biosynthesis via de novo pathway; (S)-dihydroorotate from bicarbonate: step 2/3.</text>
</comment>
<comment type="subunit">
    <text evidence="1">Heterododecamer (2C3:3R2) of six catalytic PyrB chains organized as two trimers (C3), and six regulatory PyrI chains organized as three dimers (R2).</text>
</comment>
<comment type="similarity">
    <text evidence="1">Belongs to the aspartate/ornithine carbamoyltransferase superfamily. ATCase family.</text>
</comment>
<evidence type="ECO:0000255" key="1">
    <source>
        <dbReference type="HAMAP-Rule" id="MF_00001"/>
    </source>
</evidence>
<feature type="chain" id="PRO_1000073737" description="Aspartate carbamoyltransferase catalytic subunit">
    <location>
        <begin position="1"/>
        <end position="334"/>
    </location>
</feature>
<feature type="binding site" evidence="1">
    <location>
        <position position="71"/>
    </location>
    <ligand>
        <name>carbamoyl phosphate</name>
        <dbReference type="ChEBI" id="CHEBI:58228"/>
    </ligand>
</feature>
<feature type="binding site" evidence="1">
    <location>
        <position position="72"/>
    </location>
    <ligand>
        <name>carbamoyl phosphate</name>
        <dbReference type="ChEBI" id="CHEBI:58228"/>
    </ligand>
</feature>
<feature type="binding site" evidence="1">
    <location>
        <position position="99"/>
    </location>
    <ligand>
        <name>L-aspartate</name>
        <dbReference type="ChEBI" id="CHEBI:29991"/>
    </ligand>
</feature>
<feature type="binding site" evidence="1">
    <location>
        <position position="121"/>
    </location>
    <ligand>
        <name>carbamoyl phosphate</name>
        <dbReference type="ChEBI" id="CHEBI:58228"/>
    </ligand>
</feature>
<feature type="binding site" evidence="1">
    <location>
        <position position="151"/>
    </location>
    <ligand>
        <name>carbamoyl phosphate</name>
        <dbReference type="ChEBI" id="CHEBI:58228"/>
    </ligand>
</feature>
<feature type="binding site" evidence="1">
    <location>
        <position position="154"/>
    </location>
    <ligand>
        <name>carbamoyl phosphate</name>
        <dbReference type="ChEBI" id="CHEBI:58228"/>
    </ligand>
</feature>
<feature type="binding site" evidence="1">
    <location>
        <position position="184"/>
    </location>
    <ligand>
        <name>L-aspartate</name>
        <dbReference type="ChEBI" id="CHEBI:29991"/>
    </ligand>
</feature>
<feature type="binding site" evidence="1">
    <location>
        <position position="239"/>
    </location>
    <ligand>
        <name>L-aspartate</name>
        <dbReference type="ChEBI" id="CHEBI:29991"/>
    </ligand>
</feature>
<feature type="binding site" evidence="1">
    <location>
        <position position="280"/>
    </location>
    <ligand>
        <name>carbamoyl phosphate</name>
        <dbReference type="ChEBI" id="CHEBI:58228"/>
    </ligand>
</feature>
<feature type="binding site" evidence="1">
    <location>
        <position position="281"/>
    </location>
    <ligand>
        <name>carbamoyl phosphate</name>
        <dbReference type="ChEBI" id="CHEBI:58228"/>
    </ligand>
</feature>
<organism>
    <name type="scientific">Pseudomonas putida (strain GB-1)</name>
    <dbReference type="NCBI Taxonomy" id="76869"/>
    <lineage>
        <taxon>Bacteria</taxon>
        <taxon>Pseudomonadati</taxon>
        <taxon>Pseudomonadota</taxon>
        <taxon>Gammaproteobacteria</taxon>
        <taxon>Pseudomonadales</taxon>
        <taxon>Pseudomonadaceae</taxon>
        <taxon>Pseudomonas</taxon>
    </lineage>
</organism>
<sequence>MTPIDAKRPLQLNDQGQLRHFLSLDGLPRELLTEILDTADSFLEVGARAVKKVPLLRGKTVCNVFFENSTRTRTTFELAAQRLSADVISLNVSTSSTSKGETLFDTLRNLEAMAADMFVVRHSDSGAAHFIAEHVCPDVAVINGGDGRHAHPTQGMLDMLTIRRHKGSFENLSVAIVGDILHSRVARSDMLALKALGCPDIRVIGPKTLIPIGIEQYGVKVYTDLAEGLKDVDVVIMLRLQRERMAGGLLPSEGEFYRLFGLTTARLAGAKPDAIVMHPGPINRGVEIESAVADGKHSVILNQVTYGIAVRMAVLSMAMSGQNAQRQFDQENAQ</sequence>
<protein>
    <recommendedName>
        <fullName evidence="1">Aspartate carbamoyltransferase catalytic subunit</fullName>
        <ecNumber evidence="1">2.1.3.2</ecNumber>
    </recommendedName>
    <alternativeName>
        <fullName evidence="1">Aspartate transcarbamylase</fullName>
        <shortName evidence="1">ATCase</shortName>
    </alternativeName>
</protein>
<gene>
    <name evidence="1" type="primary">pyrB</name>
    <name type="ordered locus">PputGB1_5048</name>
</gene>
<keyword id="KW-0665">Pyrimidine biosynthesis</keyword>
<keyword id="KW-0808">Transferase</keyword>
<reference key="1">
    <citation type="submission" date="2008-01" db="EMBL/GenBank/DDBJ databases">
        <title>Complete sequence of Pseudomonas putida GB-1.</title>
        <authorList>
            <consortium name="US DOE Joint Genome Institute"/>
            <person name="Copeland A."/>
            <person name="Lucas S."/>
            <person name="Lapidus A."/>
            <person name="Barry K."/>
            <person name="Glavina del Rio T."/>
            <person name="Dalin E."/>
            <person name="Tice H."/>
            <person name="Pitluck S."/>
            <person name="Bruce D."/>
            <person name="Goodwin L."/>
            <person name="Chertkov O."/>
            <person name="Brettin T."/>
            <person name="Detter J.C."/>
            <person name="Han C."/>
            <person name="Kuske C.R."/>
            <person name="Schmutz J."/>
            <person name="Larimer F."/>
            <person name="Land M."/>
            <person name="Hauser L."/>
            <person name="Kyrpides N."/>
            <person name="Kim E."/>
            <person name="McCarthy J.K."/>
            <person name="Richardson P."/>
        </authorList>
    </citation>
    <scope>NUCLEOTIDE SEQUENCE [LARGE SCALE GENOMIC DNA]</scope>
    <source>
        <strain>GB-1</strain>
    </source>
</reference>
<dbReference type="EC" id="2.1.3.2" evidence="1"/>
<dbReference type="EMBL" id="CP000926">
    <property type="protein sequence ID" value="ABZ00933.1"/>
    <property type="molecule type" value="Genomic_DNA"/>
</dbReference>
<dbReference type="RefSeq" id="WP_008099987.1">
    <property type="nucleotide sequence ID" value="NC_010322.1"/>
</dbReference>
<dbReference type="SMR" id="B0KM23"/>
<dbReference type="KEGG" id="ppg:PputGB1_5048"/>
<dbReference type="eggNOG" id="COG0540">
    <property type="taxonomic scope" value="Bacteria"/>
</dbReference>
<dbReference type="HOGENOM" id="CLU_043846_2_0_6"/>
<dbReference type="UniPathway" id="UPA00070">
    <property type="reaction ID" value="UER00116"/>
</dbReference>
<dbReference type="Proteomes" id="UP000002157">
    <property type="component" value="Chromosome"/>
</dbReference>
<dbReference type="GO" id="GO:0005829">
    <property type="term" value="C:cytosol"/>
    <property type="evidence" value="ECO:0007669"/>
    <property type="project" value="TreeGrafter"/>
</dbReference>
<dbReference type="GO" id="GO:0016597">
    <property type="term" value="F:amino acid binding"/>
    <property type="evidence" value="ECO:0007669"/>
    <property type="project" value="InterPro"/>
</dbReference>
<dbReference type="GO" id="GO:0004070">
    <property type="term" value="F:aspartate carbamoyltransferase activity"/>
    <property type="evidence" value="ECO:0007669"/>
    <property type="project" value="UniProtKB-UniRule"/>
</dbReference>
<dbReference type="GO" id="GO:0006207">
    <property type="term" value="P:'de novo' pyrimidine nucleobase biosynthetic process"/>
    <property type="evidence" value="ECO:0007669"/>
    <property type="project" value="InterPro"/>
</dbReference>
<dbReference type="GO" id="GO:0044205">
    <property type="term" value="P:'de novo' UMP biosynthetic process"/>
    <property type="evidence" value="ECO:0007669"/>
    <property type="project" value="UniProtKB-UniRule"/>
</dbReference>
<dbReference type="GO" id="GO:0006520">
    <property type="term" value="P:amino acid metabolic process"/>
    <property type="evidence" value="ECO:0007669"/>
    <property type="project" value="InterPro"/>
</dbReference>
<dbReference type="FunFam" id="3.40.50.1370:FF:000006">
    <property type="entry name" value="Aspartate carbamoyltransferase"/>
    <property type="match status" value="1"/>
</dbReference>
<dbReference type="FunFam" id="3.40.50.1370:FF:000007">
    <property type="entry name" value="Aspartate carbamoyltransferase"/>
    <property type="match status" value="1"/>
</dbReference>
<dbReference type="Gene3D" id="3.40.50.1370">
    <property type="entry name" value="Aspartate/ornithine carbamoyltransferase"/>
    <property type="match status" value="2"/>
</dbReference>
<dbReference type="HAMAP" id="MF_00001">
    <property type="entry name" value="Asp_carb_tr"/>
    <property type="match status" value="1"/>
</dbReference>
<dbReference type="InterPro" id="IPR006132">
    <property type="entry name" value="Asp/Orn_carbamoyltranf_P-bd"/>
</dbReference>
<dbReference type="InterPro" id="IPR006130">
    <property type="entry name" value="Asp/Orn_carbamoylTrfase"/>
</dbReference>
<dbReference type="InterPro" id="IPR036901">
    <property type="entry name" value="Asp/Orn_carbamoylTrfase_sf"/>
</dbReference>
<dbReference type="InterPro" id="IPR002082">
    <property type="entry name" value="Asp_carbamoyltransf"/>
</dbReference>
<dbReference type="InterPro" id="IPR006131">
    <property type="entry name" value="Asp_carbamoyltransf_Asp/Orn-bd"/>
</dbReference>
<dbReference type="NCBIfam" id="TIGR00670">
    <property type="entry name" value="asp_carb_tr"/>
    <property type="match status" value="1"/>
</dbReference>
<dbReference type="NCBIfam" id="NF002032">
    <property type="entry name" value="PRK00856.1"/>
    <property type="match status" value="1"/>
</dbReference>
<dbReference type="PANTHER" id="PTHR45753:SF6">
    <property type="entry name" value="ASPARTATE CARBAMOYLTRANSFERASE"/>
    <property type="match status" value="1"/>
</dbReference>
<dbReference type="PANTHER" id="PTHR45753">
    <property type="entry name" value="ORNITHINE CARBAMOYLTRANSFERASE, MITOCHONDRIAL"/>
    <property type="match status" value="1"/>
</dbReference>
<dbReference type="Pfam" id="PF00185">
    <property type="entry name" value="OTCace"/>
    <property type="match status" value="1"/>
</dbReference>
<dbReference type="Pfam" id="PF02729">
    <property type="entry name" value="OTCace_N"/>
    <property type="match status" value="1"/>
</dbReference>
<dbReference type="PRINTS" id="PR00100">
    <property type="entry name" value="AOTCASE"/>
</dbReference>
<dbReference type="PRINTS" id="PR00101">
    <property type="entry name" value="ATCASE"/>
</dbReference>
<dbReference type="SUPFAM" id="SSF53671">
    <property type="entry name" value="Aspartate/ornithine carbamoyltransferase"/>
    <property type="match status" value="1"/>
</dbReference>
<dbReference type="PROSITE" id="PS00097">
    <property type="entry name" value="CARBAMOYLTRANSFERASE"/>
    <property type="match status" value="1"/>
</dbReference>
<accession>B0KM23</accession>